<sequence>MSKGPGPGGSAASSAPPAATAQVLQAQPEKPQHYTYLKEFRTEQCPLFVQHKCTQHRPYTCFHWHFVNQRRRRSIRRRDGTFNYSPDVYCTKYDEATGLCPEGDECPFLHRTTGDTERRYHLRYYKTGICIHETDSKGNCTKNGLHCAFAHGPHDLRSPVYDIRELQAMEALQNGQTTVEGSIEGQSAGAASHAMIEKILSEEPRWQETAYVLGNYKTEPCKKPPRLCRQGYACPYYHNSKDRRRSPRKHKYRSSPCPNVKHGDEWGDPGKCENGDACQYCHTRTEQQFHPEIYKSTKCNDMQQAGSCPRGPFCAFAHIEPPPLSDDVQPSSAVSSPTQPGPVLYMPSAAGDSVPVSPSSPHAPDLSALLCRNSGLGSPSHLCSSPPGPSRKASNLEGLVFPGESSLAPGSYKKAPGFEREDQVGAEYLKNFKCQAKLKPHSLEPRSQEQPLLQPKQDVLGILPVGSPLTSSISSSITSSLAATPPSPAGTNSTPGMNANALPFYPTSDTVESVIESALDDLDLNEFGVAALEKTFDNSAVPHPSSVTIGGSLLQSSAPVNIPGSLGSSASFHSASPSPPVSLSSHFLQQPQGHLSQSENTFLGTSASHGSLGLNGMNSSIWEHFASGSFSPGTSPAFLSGPGAAELARLRQELDEANGTIKQWEESWKQAKQACDAWKKEAEEAGERASAAGAECELAREQRDALELRVKKLQEELERLHTVPEAQTLPAAPDLEALSLSTLYSIQKQLRVHLEQVDKAVFHMQSVKCLKCQEQTRAVLPCQHAVLCELCAEGSECPVCQPSRAHALQS</sequence>
<keyword id="KW-0002">3D-structure</keyword>
<keyword id="KW-0025">Alternative splicing</keyword>
<keyword id="KW-0175">Coiled coil</keyword>
<keyword id="KW-0963">Cytoplasm</keyword>
<keyword id="KW-0479">Metal-binding</keyword>
<keyword id="KW-0597">Phosphoprotein</keyword>
<keyword id="KW-1185">Reference proteome</keyword>
<keyword id="KW-0677">Repeat</keyword>
<keyword id="KW-0678">Repressor</keyword>
<keyword id="KW-0694">RNA-binding</keyword>
<keyword id="KW-0810">Translation regulation</keyword>
<keyword id="KW-0862">Zinc</keyword>
<keyword id="KW-0863">Zinc-finger</keyword>
<organism>
    <name type="scientific">Mus musculus</name>
    <name type="common">Mouse</name>
    <dbReference type="NCBI Taxonomy" id="10090"/>
    <lineage>
        <taxon>Eukaryota</taxon>
        <taxon>Metazoa</taxon>
        <taxon>Chordata</taxon>
        <taxon>Craniata</taxon>
        <taxon>Vertebrata</taxon>
        <taxon>Euteleostomi</taxon>
        <taxon>Mammalia</taxon>
        <taxon>Eutheria</taxon>
        <taxon>Euarchontoglires</taxon>
        <taxon>Glires</taxon>
        <taxon>Rodentia</taxon>
        <taxon>Myomorpha</taxon>
        <taxon>Muroidea</taxon>
        <taxon>Muridae</taxon>
        <taxon>Murinae</taxon>
        <taxon>Mus</taxon>
        <taxon>Mus</taxon>
    </lineage>
</organism>
<proteinExistence type="evidence at protein level"/>
<comment type="function">
    <text evidence="5">Sequence-specific RNA-binding protein which plays an important role in the establishment and maintenance of the early morphology of cortical neurons during embryonic development. Acts as a translation repressor and controls a translationally regulated cell morphology program to ensure proper structuring of the nervous system. Translational control depends on recognition of its binding element within target mRNAs which consists of a mandatory UAG trimer upstream of a U/A-rich motif. Associated with polysomes (PubMed:25737280).</text>
</comment>
<comment type="subcellular location">
    <subcellularLocation>
        <location evidence="5">Cytoplasm</location>
    </subcellularLocation>
</comment>
<comment type="alternative products">
    <event type="alternative splicing"/>
    <isoform>
        <id>Q8BL48-1</id>
        <name>1</name>
        <sequence type="displayed"/>
    </isoform>
    <isoform>
        <id>Q8BL48-2</id>
        <name>2</name>
        <sequence type="described" ref="VSP_010274"/>
    </isoform>
</comment>
<comment type="developmental stage">
    <text evidence="5">First expressed at 12 dpc and then expression declines postnatally. Highly expressed in the developing CNS (at protein level).</text>
</comment>
<comment type="similarity">
    <text evidence="7">Belongs to the unkempt family.</text>
</comment>
<comment type="sequence caution" evidence="7">
    <conflict type="erroneous initiation">
        <sequence resource="EMBL-CDS" id="BAC98248"/>
    </conflict>
    <text>Extended N-terminus.</text>
</comment>
<reference key="1">
    <citation type="journal article" date="2003" name="DNA Res.">
        <title>Prediction of the coding sequences of mouse homologues of KIAA gene: III. The complete nucleotide sequences of 500 mouse KIAA-homologous cDNAs identified by screening of terminal sequences of cDNA clones randomly sampled from size-fractionated libraries.</title>
        <authorList>
            <person name="Okazaki N."/>
            <person name="Kikuno R."/>
            <person name="Ohara R."/>
            <person name="Inamoto S."/>
            <person name="Koseki H."/>
            <person name="Hiraoka S."/>
            <person name="Saga Y."/>
            <person name="Nagase T."/>
            <person name="Ohara O."/>
            <person name="Koga H."/>
        </authorList>
    </citation>
    <scope>NUCLEOTIDE SEQUENCE [LARGE SCALE MRNA] (ISOFORM 1)</scope>
    <source>
        <tissue>Embryonic tail</tissue>
    </source>
</reference>
<reference key="2">
    <citation type="journal article" date="2005" name="Science">
        <title>The transcriptional landscape of the mammalian genome.</title>
        <authorList>
            <person name="Carninci P."/>
            <person name="Kasukawa T."/>
            <person name="Katayama S."/>
            <person name="Gough J."/>
            <person name="Frith M.C."/>
            <person name="Maeda N."/>
            <person name="Oyama R."/>
            <person name="Ravasi T."/>
            <person name="Lenhard B."/>
            <person name="Wells C."/>
            <person name="Kodzius R."/>
            <person name="Shimokawa K."/>
            <person name="Bajic V.B."/>
            <person name="Brenner S.E."/>
            <person name="Batalov S."/>
            <person name="Forrest A.R."/>
            <person name="Zavolan M."/>
            <person name="Davis M.J."/>
            <person name="Wilming L.G."/>
            <person name="Aidinis V."/>
            <person name="Allen J.E."/>
            <person name="Ambesi-Impiombato A."/>
            <person name="Apweiler R."/>
            <person name="Aturaliya R.N."/>
            <person name="Bailey T.L."/>
            <person name="Bansal M."/>
            <person name="Baxter L."/>
            <person name="Beisel K.W."/>
            <person name="Bersano T."/>
            <person name="Bono H."/>
            <person name="Chalk A.M."/>
            <person name="Chiu K.P."/>
            <person name="Choudhary V."/>
            <person name="Christoffels A."/>
            <person name="Clutterbuck D.R."/>
            <person name="Crowe M.L."/>
            <person name="Dalla E."/>
            <person name="Dalrymple B.P."/>
            <person name="de Bono B."/>
            <person name="Della Gatta G."/>
            <person name="di Bernardo D."/>
            <person name="Down T."/>
            <person name="Engstrom P."/>
            <person name="Fagiolini M."/>
            <person name="Faulkner G."/>
            <person name="Fletcher C.F."/>
            <person name="Fukushima T."/>
            <person name="Furuno M."/>
            <person name="Futaki S."/>
            <person name="Gariboldi M."/>
            <person name="Georgii-Hemming P."/>
            <person name="Gingeras T.R."/>
            <person name="Gojobori T."/>
            <person name="Green R.E."/>
            <person name="Gustincich S."/>
            <person name="Harbers M."/>
            <person name="Hayashi Y."/>
            <person name="Hensch T.K."/>
            <person name="Hirokawa N."/>
            <person name="Hill D."/>
            <person name="Huminiecki L."/>
            <person name="Iacono M."/>
            <person name="Ikeo K."/>
            <person name="Iwama A."/>
            <person name="Ishikawa T."/>
            <person name="Jakt M."/>
            <person name="Kanapin A."/>
            <person name="Katoh M."/>
            <person name="Kawasawa Y."/>
            <person name="Kelso J."/>
            <person name="Kitamura H."/>
            <person name="Kitano H."/>
            <person name="Kollias G."/>
            <person name="Krishnan S.P."/>
            <person name="Kruger A."/>
            <person name="Kummerfeld S.K."/>
            <person name="Kurochkin I.V."/>
            <person name="Lareau L.F."/>
            <person name="Lazarevic D."/>
            <person name="Lipovich L."/>
            <person name="Liu J."/>
            <person name="Liuni S."/>
            <person name="McWilliam S."/>
            <person name="Madan Babu M."/>
            <person name="Madera M."/>
            <person name="Marchionni L."/>
            <person name="Matsuda H."/>
            <person name="Matsuzawa S."/>
            <person name="Miki H."/>
            <person name="Mignone F."/>
            <person name="Miyake S."/>
            <person name="Morris K."/>
            <person name="Mottagui-Tabar S."/>
            <person name="Mulder N."/>
            <person name="Nakano N."/>
            <person name="Nakauchi H."/>
            <person name="Ng P."/>
            <person name="Nilsson R."/>
            <person name="Nishiguchi S."/>
            <person name="Nishikawa S."/>
            <person name="Nori F."/>
            <person name="Ohara O."/>
            <person name="Okazaki Y."/>
            <person name="Orlando V."/>
            <person name="Pang K.C."/>
            <person name="Pavan W.J."/>
            <person name="Pavesi G."/>
            <person name="Pesole G."/>
            <person name="Petrovsky N."/>
            <person name="Piazza S."/>
            <person name="Reed J."/>
            <person name="Reid J.F."/>
            <person name="Ring B.Z."/>
            <person name="Ringwald M."/>
            <person name="Rost B."/>
            <person name="Ruan Y."/>
            <person name="Salzberg S.L."/>
            <person name="Sandelin A."/>
            <person name="Schneider C."/>
            <person name="Schoenbach C."/>
            <person name="Sekiguchi K."/>
            <person name="Semple C.A."/>
            <person name="Seno S."/>
            <person name="Sessa L."/>
            <person name="Sheng Y."/>
            <person name="Shibata Y."/>
            <person name="Shimada H."/>
            <person name="Shimada K."/>
            <person name="Silva D."/>
            <person name="Sinclair B."/>
            <person name="Sperling S."/>
            <person name="Stupka E."/>
            <person name="Sugiura K."/>
            <person name="Sultana R."/>
            <person name="Takenaka Y."/>
            <person name="Taki K."/>
            <person name="Tammoja K."/>
            <person name="Tan S.L."/>
            <person name="Tang S."/>
            <person name="Taylor M.S."/>
            <person name="Tegner J."/>
            <person name="Teichmann S.A."/>
            <person name="Ueda H.R."/>
            <person name="van Nimwegen E."/>
            <person name="Verardo R."/>
            <person name="Wei C.L."/>
            <person name="Yagi K."/>
            <person name="Yamanishi H."/>
            <person name="Zabarovsky E."/>
            <person name="Zhu S."/>
            <person name="Zimmer A."/>
            <person name="Hide W."/>
            <person name="Bult C."/>
            <person name="Grimmond S.M."/>
            <person name="Teasdale R.D."/>
            <person name="Liu E.T."/>
            <person name="Brusic V."/>
            <person name="Quackenbush J."/>
            <person name="Wahlestedt C."/>
            <person name="Mattick J.S."/>
            <person name="Hume D.A."/>
            <person name="Kai C."/>
            <person name="Sasaki D."/>
            <person name="Tomaru Y."/>
            <person name="Fukuda S."/>
            <person name="Kanamori-Katayama M."/>
            <person name="Suzuki M."/>
            <person name="Aoki J."/>
            <person name="Arakawa T."/>
            <person name="Iida J."/>
            <person name="Imamura K."/>
            <person name="Itoh M."/>
            <person name="Kato T."/>
            <person name="Kawaji H."/>
            <person name="Kawagashira N."/>
            <person name="Kawashima T."/>
            <person name="Kojima M."/>
            <person name="Kondo S."/>
            <person name="Konno H."/>
            <person name="Nakano K."/>
            <person name="Ninomiya N."/>
            <person name="Nishio T."/>
            <person name="Okada M."/>
            <person name="Plessy C."/>
            <person name="Shibata K."/>
            <person name="Shiraki T."/>
            <person name="Suzuki S."/>
            <person name="Tagami M."/>
            <person name="Waki K."/>
            <person name="Watahiki A."/>
            <person name="Okamura-Oho Y."/>
            <person name="Suzuki H."/>
            <person name="Kawai J."/>
            <person name="Hayashizaki Y."/>
        </authorList>
    </citation>
    <scope>NUCLEOTIDE SEQUENCE [LARGE SCALE MRNA] (ISOFORMS 1 AND 2)</scope>
    <source>
        <strain>C57BL/6J</strain>
        <tissue>Brain</tissue>
        <tissue>Medulla oblongata</tissue>
    </source>
</reference>
<reference key="3">
    <citation type="journal article" date="2009" name="PLoS Biol.">
        <title>Lineage-specific biology revealed by a finished genome assembly of the mouse.</title>
        <authorList>
            <person name="Church D.M."/>
            <person name="Goodstadt L."/>
            <person name="Hillier L.W."/>
            <person name="Zody M.C."/>
            <person name="Goldstein S."/>
            <person name="She X."/>
            <person name="Bult C.J."/>
            <person name="Agarwala R."/>
            <person name="Cherry J.L."/>
            <person name="DiCuccio M."/>
            <person name="Hlavina W."/>
            <person name="Kapustin Y."/>
            <person name="Meric P."/>
            <person name="Maglott D."/>
            <person name="Birtle Z."/>
            <person name="Marques A.C."/>
            <person name="Graves T."/>
            <person name="Zhou S."/>
            <person name="Teague B."/>
            <person name="Potamousis K."/>
            <person name="Churas C."/>
            <person name="Place M."/>
            <person name="Herschleb J."/>
            <person name="Runnheim R."/>
            <person name="Forrest D."/>
            <person name="Amos-Landgraf J."/>
            <person name="Schwartz D.C."/>
            <person name="Cheng Z."/>
            <person name="Lindblad-Toh K."/>
            <person name="Eichler E.E."/>
            <person name="Ponting C.P."/>
        </authorList>
    </citation>
    <scope>NUCLEOTIDE SEQUENCE [LARGE SCALE GENOMIC DNA]</scope>
    <source>
        <strain>C57BL/6J</strain>
    </source>
</reference>
<reference key="4">
    <citation type="journal article" date="2004" name="Genome Res.">
        <title>The status, quality, and expansion of the NIH full-length cDNA project: the Mammalian Gene Collection (MGC).</title>
        <authorList>
            <consortium name="The MGC Project Team"/>
        </authorList>
    </citation>
    <scope>NUCLEOTIDE SEQUENCE [LARGE SCALE MRNA] (ISOFORM 1)</scope>
    <source>
        <tissue>Eye</tissue>
    </source>
</reference>
<reference key="5">
    <citation type="journal article" date="2010" name="Cell">
        <title>A tissue-specific atlas of mouse protein phosphorylation and expression.</title>
        <authorList>
            <person name="Huttlin E.L."/>
            <person name="Jedrychowski M.P."/>
            <person name="Elias J.E."/>
            <person name="Goswami T."/>
            <person name="Rad R."/>
            <person name="Beausoleil S.A."/>
            <person name="Villen J."/>
            <person name="Haas W."/>
            <person name="Sowa M.E."/>
            <person name="Gygi S.P."/>
        </authorList>
    </citation>
    <scope>PHOSPHORYLATION [LARGE SCALE ANALYSIS] AT SER-378 AND SER-394</scope>
    <scope>IDENTIFICATION BY MASS SPECTROMETRY [LARGE SCALE ANALYSIS]</scope>
    <source>
        <tissue>Brain</tissue>
        <tissue>Kidney</tissue>
        <tissue>Lung</tissue>
        <tissue>Spleen</tissue>
    </source>
</reference>
<reference key="6">
    <citation type="journal article" date="2015" name="Genes Dev.">
        <title>Control of a neuronal morphology program by an RNA-binding zinc finger protein, Unkempt.</title>
        <authorList>
            <person name="Murn J."/>
            <person name="Zarnack K."/>
            <person name="Yang Y.J."/>
            <person name="Durak O."/>
            <person name="Murphy E.A."/>
            <person name="Cheloufi S."/>
            <person name="Gonzalez D.M."/>
            <person name="Teplova M."/>
            <person name="Curk T."/>
            <person name="Zuber J."/>
            <person name="Patel D.J."/>
            <person name="Ule J."/>
            <person name="Luscombe N.M."/>
            <person name="Tsai L.H."/>
            <person name="Walsh C.A."/>
            <person name="Shi Y."/>
        </authorList>
    </citation>
    <scope>FUNCTION</scope>
    <scope>SUBCELLULAR LOCATION</scope>
    <scope>DEVELOPMENTAL STAGE</scope>
    <scope>RNA-BINDING</scope>
</reference>
<protein>
    <recommendedName>
        <fullName>RING finger protein unkempt homolog</fullName>
    </recommendedName>
    <alternativeName>
        <fullName>Zinc finger CCCH domain-containing protein 5</fullName>
    </alternativeName>
</protein>
<feature type="chain" id="PRO_0000213900" description="RING finger protein unkempt homolog">
    <location>
        <begin position="1"/>
        <end position="810"/>
    </location>
</feature>
<feature type="zinc finger region" description="C3H1-type 1" evidence="3">
    <location>
        <begin position="84"/>
        <end position="113"/>
    </location>
</feature>
<feature type="zinc finger region" description="C3H1-type 2" evidence="3">
    <location>
        <begin position="124"/>
        <end position="154"/>
    </location>
</feature>
<feature type="zinc finger region" description="C3H1-type 3" evidence="3">
    <location>
        <begin position="215"/>
        <end position="241"/>
    </location>
</feature>
<feature type="zinc finger region" description="C3H1-type 4" evidence="3">
    <location>
        <begin position="251"/>
        <end position="285"/>
    </location>
</feature>
<feature type="zinc finger region" description="C3H1-type 5" evidence="3">
    <location>
        <begin position="293"/>
        <end position="321"/>
    </location>
</feature>
<feature type="zinc finger region" description="RING-type; degenerate">
    <location>
        <begin position="766"/>
        <end position="801"/>
    </location>
</feature>
<feature type="region of interest" description="Disordered" evidence="4">
    <location>
        <begin position="1"/>
        <end position="24"/>
    </location>
</feature>
<feature type="region of interest" description="Disordered" evidence="4">
    <location>
        <begin position="239"/>
        <end position="265"/>
    </location>
</feature>
<feature type="region of interest" description="Disordered" evidence="4">
    <location>
        <begin position="478"/>
        <end position="497"/>
    </location>
</feature>
<feature type="coiled-coil region" evidence="2">
    <location>
        <begin position="643"/>
        <end position="727"/>
    </location>
</feature>
<feature type="compositionally biased region" description="Low complexity" evidence="4">
    <location>
        <begin position="10"/>
        <end position="19"/>
    </location>
</feature>
<feature type="compositionally biased region" description="Basic residues" evidence="4">
    <location>
        <begin position="241"/>
        <end position="253"/>
    </location>
</feature>
<feature type="modified residue" description="Phosphoserine" evidence="1">
    <location>
        <position position="240"/>
    </location>
</feature>
<feature type="modified residue" description="Phosphoserine" evidence="1">
    <location>
        <position position="374"/>
    </location>
</feature>
<feature type="modified residue" description="Phosphoserine" evidence="8">
    <location>
        <position position="378"/>
    </location>
</feature>
<feature type="modified residue" description="Phosphoserine" evidence="1">
    <location>
        <position position="385"/>
    </location>
</feature>
<feature type="modified residue" description="Phosphoserine" evidence="8">
    <location>
        <position position="394"/>
    </location>
</feature>
<feature type="modified residue" description="Phosphoserine" evidence="1">
    <location>
        <position position="631"/>
    </location>
</feature>
<feature type="splice variant" id="VSP_010274" description="In isoform 2." evidence="6">
    <original>VSPSSPHAPDLSAL</original>
    <variation>L</variation>
    <location>
        <begin position="356"/>
        <end position="369"/>
    </location>
</feature>
<feature type="sequence conflict" description="In Ref. 2; BAC37123." evidence="7" ref="2">
    <original>T</original>
    <variation>A</variation>
    <location>
        <position position="634"/>
    </location>
</feature>
<feature type="helix" evidence="9">
    <location>
        <begin position="32"/>
        <end position="39"/>
    </location>
</feature>
<feature type="turn" evidence="9">
    <location>
        <begin position="40"/>
        <end position="42"/>
    </location>
</feature>
<feature type="helix" evidence="9">
    <location>
        <begin position="48"/>
        <end position="50"/>
    </location>
</feature>
<feature type="turn" evidence="9">
    <location>
        <begin position="56"/>
        <end position="59"/>
    </location>
</feature>
<feature type="strand" evidence="9">
    <location>
        <begin position="62"/>
        <end position="66"/>
    </location>
</feature>
<feature type="helix" evidence="9">
    <location>
        <begin position="67"/>
        <end position="69"/>
    </location>
</feature>
<feature type="strand" evidence="9">
    <location>
        <begin position="82"/>
        <end position="84"/>
    </location>
</feature>
<feature type="strand" evidence="9">
    <location>
        <begin position="86"/>
        <end position="89"/>
    </location>
</feature>
<feature type="turn" evidence="9">
    <location>
        <begin position="95"/>
        <end position="98"/>
    </location>
</feature>
<feature type="helix" evidence="9">
    <location>
        <begin position="103"/>
        <end position="105"/>
    </location>
</feature>
<feature type="helix" evidence="9">
    <location>
        <begin position="113"/>
        <end position="115"/>
    </location>
</feature>
<feature type="helix" evidence="9">
    <location>
        <begin position="116"/>
        <end position="119"/>
    </location>
</feature>
<feature type="turn" evidence="9">
    <location>
        <begin position="122"/>
        <end position="126"/>
    </location>
</feature>
<feature type="turn" evidence="9">
    <location>
        <begin position="141"/>
        <end position="143"/>
    </location>
</feature>
<feature type="strand" evidence="9">
    <location>
        <begin position="148"/>
        <end position="152"/>
    </location>
</feature>
<feature type="helix" evidence="9">
    <location>
        <begin position="153"/>
        <end position="155"/>
    </location>
</feature>
<feature type="helix" evidence="9">
    <location>
        <begin position="163"/>
        <end position="171"/>
    </location>
</feature>
<feature type="helix" evidence="10">
    <location>
        <begin position="209"/>
        <end position="215"/>
    </location>
</feature>
<feature type="strand" evidence="10">
    <location>
        <begin position="218"/>
        <end position="220"/>
    </location>
</feature>
<feature type="strand" evidence="10">
    <location>
        <begin position="235"/>
        <end position="237"/>
    </location>
</feature>
<feature type="turn" evidence="10">
    <location>
        <begin position="240"/>
        <end position="242"/>
    </location>
</feature>
<feature type="turn" evidence="10">
    <location>
        <begin position="247"/>
        <end position="249"/>
    </location>
</feature>
<feature type="strand" evidence="10">
    <location>
        <begin position="254"/>
        <end position="256"/>
    </location>
</feature>
<feature type="turn" evidence="10">
    <location>
        <begin position="258"/>
        <end position="260"/>
    </location>
</feature>
<feature type="helix" evidence="10">
    <location>
        <begin position="275"/>
        <end position="277"/>
    </location>
</feature>
<feature type="strand" evidence="10">
    <location>
        <begin position="279"/>
        <end position="281"/>
    </location>
</feature>
<feature type="helix" evidence="10">
    <location>
        <begin position="284"/>
        <end position="288"/>
    </location>
</feature>
<feature type="turn" evidence="10">
    <location>
        <begin position="291"/>
        <end position="295"/>
    </location>
</feature>
<feature type="helix" evidence="10">
    <location>
        <begin position="300"/>
        <end position="305"/>
    </location>
</feature>
<feature type="helix" evidence="10">
    <location>
        <begin position="311"/>
        <end position="313"/>
    </location>
</feature>
<feature type="strand" evidence="10">
    <location>
        <begin position="315"/>
        <end position="317"/>
    </location>
</feature>
<accession>Q8BL48</accession>
<accession>A2A853</accession>
<accession>Q8BVI6</accession>
<accession>Q99JZ8</accession>
<accession>Q99LL9</accession>
<dbReference type="EMBL" id="AK129438">
    <property type="protein sequence ID" value="BAC98248.1"/>
    <property type="status" value="ALT_INIT"/>
    <property type="molecule type" value="mRNA"/>
</dbReference>
<dbReference type="EMBL" id="AK046395">
    <property type="protein sequence ID" value="BAC32702.1"/>
    <property type="molecule type" value="mRNA"/>
</dbReference>
<dbReference type="EMBL" id="AK078095">
    <property type="protein sequence ID" value="BAC37123.1"/>
    <property type="molecule type" value="mRNA"/>
</dbReference>
<dbReference type="EMBL" id="AL607108">
    <property type="status" value="NOT_ANNOTATED_CDS"/>
    <property type="molecule type" value="Genomic_DNA"/>
</dbReference>
<dbReference type="EMBL" id="BC003195">
    <property type="protein sequence ID" value="AAH03195.1"/>
    <property type="molecule type" value="mRNA"/>
</dbReference>
<dbReference type="EMBL" id="BC005545">
    <property type="protein sequence ID" value="AAH05545.1"/>
    <property type="molecule type" value="mRNA"/>
</dbReference>
<dbReference type="EMBL" id="BC054452">
    <property type="protein sequence ID" value="AAH54452.1"/>
    <property type="molecule type" value="mRNA"/>
</dbReference>
<dbReference type="CCDS" id="CCDS25655.1">
    <molecule id="Q8BL48-1"/>
</dbReference>
<dbReference type="CCDS" id="CCDS70351.1">
    <molecule id="Q8BL48-2"/>
</dbReference>
<dbReference type="RefSeq" id="NP_001272935.1">
    <molecule id="Q8BL48-2"/>
    <property type="nucleotide sequence ID" value="NM_001286006.1"/>
</dbReference>
<dbReference type="RefSeq" id="NP_766157.1">
    <molecule id="Q8BL48-1"/>
    <property type="nucleotide sequence ID" value="NM_172569.4"/>
</dbReference>
<dbReference type="PDB" id="5ELH">
    <property type="method" value="X-ray"/>
    <property type="resolution" value="1.80 A"/>
    <property type="chains" value="A/B=31-174"/>
</dbReference>
<dbReference type="PDB" id="5ELK">
    <property type="method" value="X-ray"/>
    <property type="resolution" value="2.30 A"/>
    <property type="chains" value="A=204-335"/>
</dbReference>
<dbReference type="PDBsum" id="5ELH"/>
<dbReference type="PDBsum" id="5ELK"/>
<dbReference type="SMR" id="Q8BL48"/>
<dbReference type="BioGRID" id="229889">
    <property type="interactions" value="263"/>
</dbReference>
<dbReference type="FunCoup" id="Q8BL48">
    <property type="interactions" value="1157"/>
</dbReference>
<dbReference type="IntAct" id="Q8BL48">
    <property type="interactions" value="2"/>
</dbReference>
<dbReference type="MINT" id="Q8BL48"/>
<dbReference type="STRING" id="10090.ENSMUSP00000021116"/>
<dbReference type="GlyGen" id="Q8BL48">
    <property type="glycosylation" value="1 site"/>
</dbReference>
<dbReference type="iPTMnet" id="Q8BL48"/>
<dbReference type="PhosphoSitePlus" id="Q8BL48"/>
<dbReference type="jPOST" id="Q8BL48"/>
<dbReference type="PaxDb" id="10090-ENSMUSP00000021116"/>
<dbReference type="ProteomicsDB" id="275388">
    <molecule id="Q8BL48-1"/>
</dbReference>
<dbReference type="ProteomicsDB" id="275389">
    <molecule id="Q8BL48-2"/>
</dbReference>
<dbReference type="Pumba" id="Q8BL48"/>
<dbReference type="Antibodypedia" id="32266">
    <property type="antibodies" value="77 antibodies from 15 providers"/>
</dbReference>
<dbReference type="DNASU" id="217331"/>
<dbReference type="Ensembl" id="ENSMUST00000021116.12">
    <molecule id="Q8BL48-1"/>
    <property type="protein sequence ID" value="ENSMUSP00000021116.6"/>
    <property type="gene ID" value="ENSMUSG00000020770.14"/>
</dbReference>
<dbReference type="Ensembl" id="ENSMUST00000106452.2">
    <molecule id="Q8BL48-2"/>
    <property type="protein sequence ID" value="ENSMUSP00000102060.2"/>
    <property type="gene ID" value="ENSMUSG00000020770.14"/>
</dbReference>
<dbReference type="GeneID" id="217331"/>
<dbReference type="KEGG" id="mmu:217331"/>
<dbReference type="UCSC" id="uc007mjp.2">
    <molecule id="Q8BL48-1"/>
    <property type="organism name" value="mouse"/>
</dbReference>
<dbReference type="AGR" id="MGI:2442456"/>
<dbReference type="CTD" id="85451"/>
<dbReference type="MGI" id="MGI:2442456">
    <property type="gene designation" value="Unk"/>
</dbReference>
<dbReference type="VEuPathDB" id="HostDB:ENSMUSG00000020770"/>
<dbReference type="eggNOG" id="KOG1100">
    <property type="taxonomic scope" value="Eukaryota"/>
</dbReference>
<dbReference type="eggNOG" id="KOG1595">
    <property type="taxonomic scope" value="Eukaryota"/>
</dbReference>
<dbReference type="GeneTree" id="ENSGT00940000159360"/>
<dbReference type="HOGENOM" id="CLU_014526_1_0_1"/>
<dbReference type="InParanoid" id="Q8BL48"/>
<dbReference type="OMA" id="KCACEAW"/>
<dbReference type="OrthoDB" id="20534at2759"/>
<dbReference type="PhylomeDB" id="Q8BL48"/>
<dbReference type="TreeFam" id="TF314982"/>
<dbReference type="BioGRID-ORCS" id="217331">
    <property type="hits" value="8 hits in 78 CRISPR screens"/>
</dbReference>
<dbReference type="ChiTaRS" id="Unk">
    <property type="organism name" value="mouse"/>
</dbReference>
<dbReference type="EvolutionaryTrace" id="Q8BL48"/>
<dbReference type="PRO" id="PR:Q8BL48"/>
<dbReference type="Proteomes" id="UP000000589">
    <property type="component" value="Chromosome 11"/>
</dbReference>
<dbReference type="RNAct" id="Q8BL48">
    <property type="molecule type" value="protein"/>
</dbReference>
<dbReference type="Bgee" id="ENSMUSG00000020770">
    <property type="expression patterns" value="Expressed in dorsal pancreas and 245 other cell types or tissues"/>
</dbReference>
<dbReference type="ExpressionAtlas" id="Q8BL48">
    <property type="expression patterns" value="baseline and differential"/>
</dbReference>
<dbReference type="GO" id="GO:0005737">
    <property type="term" value="C:cytoplasm"/>
    <property type="evidence" value="ECO:0007669"/>
    <property type="project" value="UniProtKB-SubCell"/>
</dbReference>
<dbReference type="GO" id="GO:1990715">
    <property type="term" value="F:mRNA CDS binding"/>
    <property type="evidence" value="ECO:0000314"/>
    <property type="project" value="MGI"/>
</dbReference>
<dbReference type="GO" id="GO:0043022">
    <property type="term" value="F:ribosome binding"/>
    <property type="evidence" value="ECO:0000314"/>
    <property type="project" value="MGI"/>
</dbReference>
<dbReference type="GO" id="GO:0008270">
    <property type="term" value="F:zinc ion binding"/>
    <property type="evidence" value="ECO:0007669"/>
    <property type="project" value="UniProtKB-KW"/>
</dbReference>
<dbReference type="GO" id="GO:0048667">
    <property type="term" value="P:cell morphogenesis involved in neuron differentiation"/>
    <property type="evidence" value="ECO:0007669"/>
    <property type="project" value="Ensembl"/>
</dbReference>
<dbReference type="GO" id="GO:0001701">
    <property type="term" value="P:in utero embryonic development"/>
    <property type="evidence" value="ECO:0000315"/>
    <property type="project" value="MGI"/>
</dbReference>
<dbReference type="GO" id="GO:2000766">
    <property type="term" value="P:negative regulation of cytoplasmic translation"/>
    <property type="evidence" value="ECO:0007669"/>
    <property type="project" value="Ensembl"/>
</dbReference>
<dbReference type="GO" id="GO:0001764">
    <property type="term" value="P:neuron migration"/>
    <property type="evidence" value="ECO:0000315"/>
    <property type="project" value="MGI"/>
</dbReference>
<dbReference type="CDD" id="cd16771">
    <property type="entry name" value="RING-HC_UNK"/>
    <property type="match status" value="1"/>
</dbReference>
<dbReference type="Gene3D" id="4.10.1000.10">
    <property type="entry name" value="Zinc finger, CCCH-type"/>
    <property type="match status" value="2"/>
</dbReference>
<dbReference type="InterPro" id="IPR045234">
    <property type="entry name" value="Unkempt-like"/>
</dbReference>
<dbReference type="InterPro" id="IPR040594">
    <property type="entry name" value="Unkempt_Znf"/>
</dbReference>
<dbReference type="InterPro" id="IPR000571">
    <property type="entry name" value="Znf_CCCH"/>
</dbReference>
<dbReference type="InterPro" id="IPR036855">
    <property type="entry name" value="Znf_CCCH_sf"/>
</dbReference>
<dbReference type="PANTHER" id="PTHR14493:SF36">
    <property type="entry name" value="RING FINGER PROTEIN UNKEMPT HOMOLOG"/>
    <property type="match status" value="1"/>
</dbReference>
<dbReference type="PANTHER" id="PTHR14493">
    <property type="entry name" value="UNKEMPT FAMILY MEMBER"/>
    <property type="match status" value="1"/>
</dbReference>
<dbReference type="Pfam" id="PF00642">
    <property type="entry name" value="zf-CCCH"/>
    <property type="match status" value="1"/>
</dbReference>
<dbReference type="Pfam" id="PF23261">
    <property type="entry name" value="zf-CCCH_11"/>
    <property type="match status" value="1"/>
</dbReference>
<dbReference type="Pfam" id="PF25427">
    <property type="entry name" value="zf-CCCH_UNK"/>
    <property type="match status" value="1"/>
</dbReference>
<dbReference type="Pfam" id="PF23035">
    <property type="entry name" value="zf-CCCH_UNK-like_4th"/>
    <property type="match status" value="1"/>
</dbReference>
<dbReference type="Pfam" id="PF18384">
    <property type="entry name" value="zf_CCCH_5"/>
    <property type="match status" value="1"/>
</dbReference>
<dbReference type="SMART" id="SM00356">
    <property type="entry name" value="ZnF_C3H1"/>
    <property type="match status" value="5"/>
</dbReference>
<dbReference type="SUPFAM" id="SSF90229">
    <property type="entry name" value="CCCH zinc finger"/>
    <property type="match status" value="1"/>
</dbReference>
<dbReference type="PROSITE" id="PS50103">
    <property type="entry name" value="ZF_C3H1"/>
    <property type="match status" value="5"/>
</dbReference>
<name>UNK_MOUSE</name>
<gene>
    <name type="primary">Unk</name>
    <name type="synonym">Kiaa1753</name>
    <name type="synonym">Zc3h5</name>
    <name type="synonym">Zc3hdc5</name>
</gene>
<evidence type="ECO:0000250" key="1">
    <source>
        <dbReference type="UniProtKB" id="Q9C0B0"/>
    </source>
</evidence>
<evidence type="ECO:0000255" key="2"/>
<evidence type="ECO:0000255" key="3">
    <source>
        <dbReference type="PROSITE-ProRule" id="PRU00723"/>
    </source>
</evidence>
<evidence type="ECO:0000256" key="4">
    <source>
        <dbReference type="SAM" id="MobiDB-lite"/>
    </source>
</evidence>
<evidence type="ECO:0000269" key="5">
    <source>
    </source>
</evidence>
<evidence type="ECO:0000303" key="6">
    <source>
    </source>
</evidence>
<evidence type="ECO:0000305" key="7"/>
<evidence type="ECO:0007744" key="8">
    <source>
    </source>
</evidence>
<evidence type="ECO:0007829" key="9">
    <source>
        <dbReference type="PDB" id="5ELH"/>
    </source>
</evidence>
<evidence type="ECO:0007829" key="10">
    <source>
        <dbReference type="PDB" id="5ELK"/>
    </source>
</evidence>